<sequence>MIMTPPRKLHIKSYGCQMNVYDAQRMVDTLAPEGFVETADPAEADLVILNTCHIREKASEKVFSELGRLRVIKEEAARTGREMKIAVAGCVAQAEGAEITRRASTVDVVVGPQSYHNLPKLLAKARDGAPAIETEFPIEDKFSALPAPKPAAIRARGVSAFVTVQEGCDKFCTFCVVPYTRGMEVSRPVADIVADAKRLAENGVRELTLIGQNVNAYHGDDENGRTSSLGRLLHRLAMLPGIARLRYSTSHPRDVDDSLIEAHRDIPAVMPFVHLPVQSGSDRILAAMNRKHTAADYIRTIERFRKVRPEIAFSSDFIVGFPGESEQDFADTLALVTQIGYAGAYSFKYSPRPGTPAADMQETDTALAVPAAVMDERLAQLQALIDAQQASFNRAAIGRTVEVLFERAAREPGQIVGRTAYLQPAHVMASPDIIGKVLPVTIDSLERYSLKGRLASEETAVASLRSTQRESETFA</sequence>
<comment type="function">
    <text evidence="1">Catalyzes the methylthiolation of N6-(dimethylallyl)adenosine (i(6)A), leading to the formation of 2-methylthio-N6-(dimethylallyl)adenosine (ms(2)i(6)A) at position 37 in tRNAs that read codons beginning with uridine.</text>
</comment>
<comment type="catalytic activity">
    <reaction evidence="1">
        <text>N(6)-dimethylallyladenosine(37) in tRNA + (sulfur carrier)-SH + AH2 + 2 S-adenosyl-L-methionine = 2-methylsulfanyl-N(6)-dimethylallyladenosine(37) in tRNA + (sulfur carrier)-H + 5'-deoxyadenosine + L-methionine + A + S-adenosyl-L-homocysteine + 2 H(+)</text>
        <dbReference type="Rhea" id="RHEA:37067"/>
        <dbReference type="Rhea" id="RHEA-COMP:10375"/>
        <dbReference type="Rhea" id="RHEA-COMP:10376"/>
        <dbReference type="Rhea" id="RHEA-COMP:14737"/>
        <dbReference type="Rhea" id="RHEA-COMP:14739"/>
        <dbReference type="ChEBI" id="CHEBI:13193"/>
        <dbReference type="ChEBI" id="CHEBI:15378"/>
        <dbReference type="ChEBI" id="CHEBI:17319"/>
        <dbReference type="ChEBI" id="CHEBI:17499"/>
        <dbReference type="ChEBI" id="CHEBI:29917"/>
        <dbReference type="ChEBI" id="CHEBI:57844"/>
        <dbReference type="ChEBI" id="CHEBI:57856"/>
        <dbReference type="ChEBI" id="CHEBI:59789"/>
        <dbReference type="ChEBI" id="CHEBI:64428"/>
        <dbReference type="ChEBI" id="CHEBI:74415"/>
        <dbReference type="ChEBI" id="CHEBI:74417"/>
        <dbReference type="EC" id="2.8.4.3"/>
    </reaction>
</comment>
<comment type="cofactor">
    <cofactor evidence="1">
        <name>[4Fe-4S] cluster</name>
        <dbReference type="ChEBI" id="CHEBI:49883"/>
    </cofactor>
    <text evidence="1">Binds 2 [4Fe-4S] clusters. One cluster is coordinated with 3 cysteines and an exchangeable S-adenosyl-L-methionine.</text>
</comment>
<comment type="subunit">
    <text evidence="1">Monomer.</text>
</comment>
<comment type="subcellular location">
    <subcellularLocation>
        <location evidence="1">Cytoplasm</location>
    </subcellularLocation>
</comment>
<comment type="similarity">
    <text evidence="1">Belongs to the methylthiotransferase family. MiaB subfamily.</text>
</comment>
<comment type="sequence caution" evidence="3">
    <conflict type="erroneous initiation">
        <sequence resource="EMBL-CDS" id="AEI04750"/>
    </conflict>
    <text>Truncated N-terminus.</text>
</comment>
<dbReference type="EC" id="2.8.4.3" evidence="1"/>
<dbReference type="EMBL" id="CP001196">
    <property type="protein sequence ID" value="ACI91666.1"/>
    <property type="molecule type" value="Genomic_DNA"/>
</dbReference>
<dbReference type="EMBL" id="CP002826">
    <property type="protein sequence ID" value="AEI04750.1"/>
    <property type="status" value="ALT_INIT"/>
    <property type="molecule type" value="Genomic_DNA"/>
</dbReference>
<dbReference type="SMR" id="B6JCT6"/>
<dbReference type="STRING" id="504832.OCA5_c00160"/>
<dbReference type="KEGG" id="oca:OCAR_4521"/>
<dbReference type="KEGG" id="ocg:OCA5_c00160"/>
<dbReference type="PATRIC" id="fig|504832.7.peg.18"/>
<dbReference type="eggNOG" id="COG0621">
    <property type="taxonomic scope" value="Bacteria"/>
</dbReference>
<dbReference type="HOGENOM" id="CLU_018697_2_0_5"/>
<dbReference type="Proteomes" id="UP000007730">
    <property type="component" value="Chromosome"/>
</dbReference>
<dbReference type="GO" id="GO:0005829">
    <property type="term" value="C:cytosol"/>
    <property type="evidence" value="ECO:0007669"/>
    <property type="project" value="TreeGrafter"/>
</dbReference>
<dbReference type="GO" id="GO:0051539">
    <property type="term" value="F:4 iron, 4 sulfur cluster binding"/>
    <property type="evidence" value="ECO:0007669"/>
    <property type="project" value="UniProtKB-UniRule"/>
</dbReference>
<dbReference type="GO" id="GO:0046872">
    <property type="term" value="F:metal ion binding"/>
    <property type="evidence" value="ECO:0007669"/>
    <property type="project" value="UniProtKB-KW"/>
</dbReference>
<dbReference type="GO" id="GO:0035597">
    <property type="term" value="F:N6-isopentenyladenosine methylthiotransferase activity"/>
    <property type="evidence" value="ECO:0007669"/>
    <property type="project" value="TreeGrafter"/>
</dbReference>
<dbReference type="CDD" id="cd01335">
    <property type="entry name" value="Radical_SAM"/>
    <property type="match status" value="1"/>
</dbReference>
<dbReference type="FunFam" id="3.40.50.12160:FF:000003">
    <property type="entry name" value="CDK5 regulatory subunit-associated protein 1"/>
    <property type="match status" value="1"/>
</dbReference>
<dbReference type="FunFam" id="3.80.30.20:FF:000001">
    <property type="entry name" value="tRNA-2-methylthio-N(6)-dimethylallyladenosine synthase 2"/>
    <property type="match status" value="1"/>
</dbReference>
<dbReference type="Gene3D" id="3.40.50.12160">
    <property type="entry name" value="Methylthiotransferase, N-terminal domain"/>
    <property type="match status" value="1"/>
</dbReference>
<dbReference type="Gene3D" id="3.80.30.20">
    <property type="entry name" value="tm_1862 like domain"/>
    <property type="match status" value="1"/>
</dbReference>
<dbReference type="HAMAP" id="MF_01864">
    <property type="entry name" value="tRNA_metthiotr_MiaB"/>
    <property type="match status" value="1"/>
</dbReference>
<dbReference type="InterPro" id="IPR006638">
    <property type="entry name" value="Elp3/MiaA/NifB-like_rSAM"/>
</dbReference>
<dbReference type="InterPro" id="IPR005839">
    <property type="entry name" value="Methylthiotransferase"/>
</dbReference>
<dbReference type="InterPro" id="IPR020612">
    <property type="entry name" value="Methylthiotransferase_CS"/>
</dbReference>
<dbReference type="InterPro" id="IPR013848">
    <property type="entry name" value="Methylthiotransferase_N"/>
</dbReference>
<dbReference type="InterPro" id="IPR038135">
    <property type="entry name" value="Methylthiotransferase_N_sf"/>
</dbReference>
<dbReference type="InterPro" id="IPR006463">
    <property type="entry name" value="MiaB_methiolase"/>
</dbReference>
<dbReference type="InterPro" id="IPR007197">
    <property type="entry name" value="rSAM"/>
</dbReference>
<dbReference type="InterPro" id="IPR023404">
    <property type="entry name" value="rSAM_horseshoe"/>
</dbReference>
<dbReference type="InterPro" id="IPR002792">
    <property type="entry name" value="TRAM_dom"/>
</dbReference>
<dbReference type="NCBIfam" id="TIGR01574">
    <property type="entry name" value="miaB-methiolase"/>
    <property type="match status" value="1"/>
</dbReference>
<dbReference type="NCBIfam" id="TIGR00089">
    <property type="entry name" value="MiaB/RimO family radical SAM methylthiotransferase"/>
    <property type="match status" value="1"/>
</dbReference>
<dbReference type="PANTHER" id="PTHR43020">
    <property type="entry name" value="CDK5 REGULATORY SUBUNIT-ASSOCIATED PROTEIN 1"/>
    <property type="match status" value="1"/>
</dbReference>
<dbReference type="PANTHER" id="PTHR43020:SF2">
    <property type="entry name" value="MITOCHONDRIAL TRNA METHYLTHIOTRANSFERASE CDK5RAP1"/>
    <property type="match status" value="1"/>
</dbReference>
<dbReference type="Pfam" id="PF04055">
    <property type="entry name" value="Radical_SAM"/>
    <property type="match status" value="1"/>
</dbReference>
<dbReference type="Pfam" id="PF01938">
    <property type="entry name" value="TRAM"/>
    <property type="match status" value="1"/>
</dbReference>
<dbReference type="Pfam" id="PF00919">
    <property type="entry name" value="UPF0004"/>
    <property type="match status" value="1"/>
</dbReference>
<dbReference type="SFLD" id="SFLDF00273">
    <property type="entry name" value="(dimethylallyl)adenosine_tRNA"/>
    <property type="match status" value="1"/>
</dbReference>
<dbReference type="SFLD" id="SFLDG01082">
    <property type="entry name" value="B12-binding_domain_containing"/>
    <property type="match status" value="1"/>
</dbReference>
<dbReference type="SFLD" id="SFLDS00029">
    <property type="entry name" value="Radical_SAM"/>
    <property type="match status" value="1"/>
</dbReference>
<dbReference type="SMART" id="SM00729">
    <property type="entry name" value="Elp3"/>
    <property type="match status" value="1"/>
</dbReference>
<dbReference type="SUPFAM" id="SSF102114">
    <property type="entry name" value="Radical SAM enzymes"/>
    <property type="match status" value="1"/>
</dbReference>
<dbReference type="PROSITE" id="PS51449">
    <property type="entry name" value="MTTASE_N"/>
    <property type="match status" value="1"/>
</dbReference>
<dbReference type="PROSITE" id="PS01278">
    <property type="entry name" value="MTTASE_RADICAL"/>
    <property type="match status" value="1"/>
</dbReference>
<dbReference type="PROSITE" id="PS51918">
    <property type="entry name" value="RADICAL_SAM"/>
    <property type="match status" value="1"/>
</dbReference>
<dbReference type="PROSITE" id="PS50926">
    <property type="entry name" value="TRAM"/>
    <property type="match status" value="1"/>
</dbReference>
<reference key="1">
    <citation type="journal article" date="2008" name="J. Bacteriol.">
        <title>Genome sequence of the chemolithoautotrophic bacterium Oligotropha carboxidovorans OM5T.</title>
        <authorList>
            <person name="Paul D."/>
            <person name="Bridges S."/>
            <person name="Burgess S.C."/>
            <person name="Dandass Y."/>
            <person name="Lawrence M.L."/>
        </authorList>
    </citation>
    <scope>NUCLEOTIDE SEQUENCE [LARGE SCALE GENOMIC DNA]</scope>
    <source>
        <strain>ATCC 49405 / DSM 1227 / KCTC 32145 / OM5</strain>
    </source>
</reference>
<reference key="2">
    <citation type="journal article" date="2011" name="J. Bacteriol.">
        <title>Complete genome sequences of the chemolithoautotrophic Oligotropha carboxidovorans strains OM4 and OM5.</title>
        <authorList>
            <person name="Volland S."/>
            <person name="Rachinger M."/>
            <person name="Strittmatter A."/>
            <person name="Daniel R."/>
            <person name="Gottschalk G."/>
            <person name="Meyer O."/>
        </authorList>
    </citation>
    <scope>NUCLEOTIDE SEQUENCE [LARGE SCALE GENOMIC DNA]</scope>
    <source>
        <strain>ATCC 49405 / DSM 1227 / KCTC 32145 / OM5</strain>
    </source>
</reference>
<name>MIAB_AFIC5</name>
<gene>
    <name evidence="1" type="primary">miaB</name>
    <name type="ordered locus">OCAR_4521</name>
    <name type="ordered locus">OCA5_c00160</name>
</gene>
<feature type="chain" id="PRO_0000374420" description="tRNA-2-methylthio-N(6)-dimethylallyladenosine synthase">
    <location>
        <begin position="1"/>
        <end position="475"/>
    </location>
</feature>
<feature type="domain" description="MTTase N-terminal" evidence="1">
    <location>
        <begin position="7"/>
        <end position="127"/>
    </location>
</feature>
<feature type="domain" description="Radical SAM core" evidence="2">
    <location>
        <begin position="154"/>
        <end position="388"/>
    </location>
</feature>
<feature type="domain" description="TRAM" evidence="1">
    <location>
        <begin position="394"/>
        <end position="456"/>
    </location>
</feature>
<feature type="binding site" evidence="1">
    <location>
        <position position="16"/>
    </location>
    <ligand>
        <name>[4Fe-4S] cluster</name>
        <dbReference type="ChEBI" id="CHEBI:49883"/>
        <label>1</label>
    </ligand>
</feature>
<feature type="binding site" evidence="1">
    <location>
        <position position="52"/>
    </location>
    <ligand>
        <name>[4Fe-4S] cluster</name>
        <dbReference type="ChEBI" id="CHEBI:49883"/>
        <label>1</label>
    </ligand>
</feature>
<feature type="binding site" evidence="1">
    <location>
        <position position="90"/>
    </location>
    <ligand>
        <name>[4Fe-4S] cluster</name>
        <dbReference type="ChEBI" id="CHEBI:49883"/>
        <label>1</label>
    </ligand>
</feature>
<feature type="binding site" evidence="1">
    <location>
        <position position="168"/>
    </location>
    <ligand>
        <name>[4Fe-4S] cluster</name>
        <dbReference type="ChEBI" id="CHEBI:49883"/>
        <label>2</label>
        <note>4Fe-4S-S-AdoMet</note>
    </ligand>
</feature>
<feature type="binding site" evidence="1">
    <location>
        <position position="172"/>
    </location>
    <ligand>
        <name>[4Fe-4S] cluster</name>
        <dbReference type="ChEBI" id="CHEBI:49883"/>
        <label>2</label>
        <note>4Fe-4S-S-AdoMet</note>
    </ligand>
</feature>
<feature type="binding site" evidence="1">
    <location>
        <position position="175"/>
    </location>
    <ligand>
        <name>[4Fe-4S] cluster</name>
        <dbReference type="ChEBI" id="CHEBI:49883"/>
        <label>2</label>
        <note>4Fe-4S-S-AdoMet</note>
    </ligand>
</feature>
<accession>B6JCT6</accession>
<accession>F8BZL6</accession>
<keyword id="KW-0004">4Fe-4S</keyword>
<keyword id="KW-0963">Cytoplasm</keyword>
<keyword id="KW-0408">Iron</keyword>
<keyword id="KW-0411">Iron-sulfur</keyword>
<keyword id="KW-0479">Metal-binding</keyword>
<keyword id="KW-1185">Reference proteome</keyword>
<keyword id="KW-0949">S-adenosyl-L-methionine</keyword>
<keyword id="KW-0808">Transferase</keyword>
<keyword id="KW-0819">tRNA processing</keyword>
<protein>
    <recommendedName>
        <fullName evidence="1">tRNA-2-methylthio-N(6)-dimethylallyladenosine synthase</fullName>
        <ecNumber evidence="1">2.8.4.3</ecNumber>
    </recommendedName>
    <alternativeName>
        <fullName evidence="1">(Dimethylallyl)adenosine tRNA methylthiotransferase MiaB</fullName>
    </alternativeName>
    <alternativeName>
        <fullName evidence="1">tRNA-i(6)A37 methylthiotransferase</fullName>
    </alternativeName>
</protein>
<organism>
    <name type="scientific">Afipia carboxidovorans (strain ATCC 49405 / DSM 1227 / KCTC 32145 / OM5)</name>
    <name type="common">Oligotropha carboxidovorans</name>
    <dbReference type="NCBI Taxonomy" id="504832"/>
    <lineage>
        <taxon>Bacteria</taxon>
        <taxon>Pseudomonadati</taxon>
        <taxon>Pseudomonadota</taxon>
        <taxon>Alphaproteobacteria</taxon>
        <taxon>Hyphomicrobiales</taxon>
        <taxon>Nitrobacteraceae</taxon>
        <taxon>Afipia</taxon>
    </lineage>
</organism>
<evidence type="ECO:0000255" key="1">
    <source>
        <dbReference type="HAMAP-Rule" id="MF_01864"/>
    </source>
</evidence>
<evidence type="ECO:0000255" key="2">
    <source>
        <dbReference type="PROSITE-ProRule" id="PRU01266"/>
    </source>
</evidence>
<evidence type="ECO:0000305" key="3"/>
<proteinExistence type="inferred from homology"/>